<comment type="function">
    <text evidence="4 5 6">Phosphatase required for histidine production. Also acts on L-galactose 1-phosphate (L-Gal 1-P), D-myoinositol 3-phosphate (D-Ins 3-P) and D-myoinositol 1-phosphate (D-Ins 1-P).</text>
</comment>
<comment type="catalytic activity">
    <reaction evidence="4 5">
        <text>a myo-inositol phosphate + H2O = myo-inositol + phosphate</text>
        <dbReference type="Rhea" id="RHEA:24056"/>
        <dbReference type="ChEBI" id="CHEBI:15377"/>
        <dbReference type="ChEBI" id="CHEBI:17268"/>
        <dbReference type="ChEBI" id="CHEBI:43474"/>
        <dbReference type="ChEBI" id="CHEBI:84139"/>
        <dbReference type="EC" id="3.1.3.25"/>
    </reaction>
</comment>
<comment type="catalytic activity">
    <reaction evidence="5">
        <text>L-histidinol phosphate + H2O = L-histidinol + phosphate</text>
        <dbReference type="Rhea" id="RHEA:14465"/>
        <dbReference type="ChEBI" id="CHEBI:15377"/>
        <dbReference type="ChEBI" id="CHEBI:43474"/>
        <dbReference type="ChEBI" id="CHEBI:57699"/>
        <dbReference type="ChEBI" id="CHEBI:57980"/>
        <dbReference type="EC" id="3.1.3.15"/>
    </reaction>
</comment>
<comment type="catalytic activity">
    <reaction evidence="4">
        <text>beta-L-galactose 1-phosphate + H2O = L-galactose + phosphate</text>
        <dbReference type="Rhea" id="RHEA:26349"/>
        <dbReference type="ChEBI" id="CHEBI:15377"/>
        <dbReference type="ChEBI" id="CHEBI:37619"/>
        <dbReference type="ChEBI" id="CHEBI:43474"/>
        <dbReference type="ChEBI" id="CHEBI:75522"/>
        <dbReference type="EC" id="3.1.3.93"/>
    </reaction>
</comment>
<comment type="cofactor">
    <cofactor evidence="1">
        <name>Mg(2+)</name>
        <dbReference type="ChEBI" id="CHEBI:18420"/>
    </cofactor>
</comment>
<comment type="pathway">
    <text>Amino-acid biosynthesis; L-histidine biosynthesis; L-histidine from 5-phospho-alpha-D-ribose 1-diphosphate: step 8/9.</text>
</comment>
<comment type="pathway">
    <text>Polyol metabolism; myo-inositol biosynthesis; myo-inositol from D-glucose 6-phosphate: step 2/2.</text>
</comment>
<comment type="subcellular location">
    <subcellularLocation>
        <location evidence="3 5">Plastid</location>
        <location evidence="3 5">Chloroplast</location>
    </subcellularLocation>
</comment>
<comment type="tissue specificity">
    <text evidence="5 6">Ubiquitous. High expression in roots. Expressed in pistil and seed endosperm.</text>
</comment>
<comment type="developmental stage">
    <text evidence="5 6">Expressed at all developmental stages. Detected in globular to heart stage embryos.</text>
</comment>
<comment type="disruption phenotype">
    <text evidence="4 5 6">Embryo lethality.</text>
</comment>
<comment type="miscellaneous">
    <text>No redundancy with IMPL1 or VTC4.</text>
</comment>
<comment type="similarity">
    <text evidence="7">Belongs to the inositol monophosphatase superfamily.</text>
</comment>
<comment type="sequence caution" evidence="7">
    <conflict type="erroneous initiation">
        <sequence resource="EMBL-CDS" id="ANM67312"/>
    </conflict>
    <text>Extended N-terminus.</text>
</comment>
<comment type="sequence caution" evidence="7">
    <conflict type="erroneous initiation">
        <sequence resource="EMBL-CDS" id="BAC43548"/>
    </conflict>
    <text>Truncated N-terminus.</text>
</comment>
<comment type="sequence caution" evidence="7">
    <conflict type="erroneous initiation">
        <sequence resource="EMBL-CDS" id="CAB43627"/>
    </conflict>
    <text>Truncated N-terminus.</text>
</comment>
<comment type="sequence caution" evidence="7">
    <conflict type="erroneous initiation">
        <sequence resource="EMBL-CDS" id="CAB80575"/>
    </conflict>
    <text>Truncated N-terminus.</text>
</comment>
<reference key="1">
    <citation type="journal article" date="1999" name="Nature">
        <title>Sequence and analysis of chromosome 4 of the plant Arabidopsis thaliana.</title>
        <authorList>
            <person name="Mayer K.F.X."/>
            <person name="Schueller C."/>
            <person name="Wambutt R."/>
            <person name="Murphy G."/>
            <person name="Volckaert G."/>
            <person name="Pohl T."/>
            <person name="Duesterhoeft A."/>
            <person name="Stiekema W."/>
            <person name="Entian K.-D."/>
            <person name="Terryn N."/>
            <person name="Harris B."/>
            <person name="Ansorge W."/>
            <person name="Brandt P."/>
            <person name="Grivell L.A."/>
            <person name="Rieger M."/>
            <person name="Weichselgartner M."/>
            <person name="de Simone V."/>
            <person name="Obermaier B."/>
            <person name="Mache R."/>
            <person name="Mueller M."/>
            <person name="Kreis M."/>
            <person name="Delseny M."/>
            <person name="Puigdomenech P."/>
            <person name="Watson M."/>
            <person name="Schmidtheini T."/>
            <person name="Reichert B."/>
            <person name="Portetelle D."/>
            <person name="Perez-Alonso M."/>
            <person name="Boutry M."/>
            <person name="Bancroft I."/>
            <person name="Vos P."/>
            <person name="Hoheisel J."/>
            <person name="Zimmermann W."/>
            <person name="Wedler H."/>
            <person name="Ridley P."/>
            <person name="Langham S.-A."/>
            <person name="McCullagh B."/>
            <person name="Bilham L."/>
            <person name="Robben J."/>
            <person name="van der Schueren J."/>
            <person name="Grymonprez B."/>
            <person name="Chuang Y.-J."/>
            <person name="Vandenbussche F."/>
            <person name="Braeken M."/>
            <person name="Weltjens I."/>
            <person name="Voet M."/>
            <person name="Bastiaens I."/>
            <person name="Aert R."/>
            <person name="Defoor E."/>
            <person name="Weitzenegger T."/>
            <person name="Bothe G."/>
            <person name="Ramsperger U."/>
            <person name="Hilbert H."/>
            <person name="Braun M."/>
            <person name="Holzer E."/>
            <person name="Brandt A."/>
            <person name="Peters S."/>
            <person name="van Staveren M."/>
            <person name="Dirkse W."/>
            <person name="Mooijman P."/>
            <person name="Klein Lankhorst R."/>
            <person name="Rose M."/>
            <person name="Hauf J."/>
            <person name="Koetter P."/>
            <person name="Berneiser S."/>
            <person name="Hempel S."/>
            <person name="Feldpausch M."/>
            <person name="Lamberth S."/>
            <person name="Van den Daele H."/>
            <person name="De Keyser A."/>
            <person name="Buysshaert C."/>
            <person name="Gielen J."/>
            <person name="Villarroel R."/>
            <person name="De Clercq R."/>
            <person name="van Montagu M."/>
            <person name="Rogers J."/>
            <person name="Cronin A."/>
            <person name="Quail M.A."/>
            <person name="Bray-Allen S."/>
            <person name="Clark L."/>
            <person name="Doggett J."/>
            <person name="Hall S."/>
            <person name="Kay M."/>
            <person name="Lennard N."/>
            <person name="McLay K."/>
            <person name="Mayes R."/>
            <person name="Pettett A."/>
            <person name="Rajandream M.A."/>
            <person name="Lyne M."/>
            <person name="Benes V."/>
            <person name="Rechmann S."/>
            <person name="Borkova D."/>
            <person name="Bloecker H."/>
            <person name="Scharfe M."/>
            <person name="Grimm M."/>
            <person name="Loehnert T.-H."/>
            <person name="Dose S."/>
            <person name="de Haan M."/>
            <person name="Maarse A.C."/>
            <person name="Schaefer M."/>
            <person name="Mueller-Auer S."/>
            <person name="Gabel C."/>
            <person name="Fuchs M."/>
            <person name="Fartmann B."/>
            <person name="Granderath K."/>
            <person name="Dauner D."/>
            <person name="Herzl A."/>
            <person name="Neumann S."/>
            <person name="Argiriou A."/>
            <person name="Vitale D."/>
            <person name="Liguori R."/>
            <person name="Piravandi E."/>
            <person name="Massenet O."/>
            <person name="Quigley F."/>
            <person name="Clabauld G."/>
            <person name="Muendlein A."/>
            <person name="Felber R."/>
            <person name="Schnabl S."/>
            <person name="Hiller R."/>
            <person name="Schmidt W."/>
            <person name="Lecharny A."/>
            <person name="Aubourg S."/>
            <person name="Chefdor F."/>
            <person name="Cooke R."/>
            <person name="Berger C."/>
            <person name="Monfort A."/>
            <person name="Casacuberta E."/>
            <person name="Gibbons T."/>
            <person name="Weber N."/>
            <person name="Vandenbol M."/>
            <person name="Bargues M."/>
            <person name="Terol J."/>
            <person name="Torres A."/>
            <person name="Perez-Perez A."/>
            <person name="Purnelle B."/>
            <person name="Bent E."/>
            <person name="Johnson S."/>
            <person name="Tacon D."/>
            <person name="Jesse T."/>
            <person name="Heijnen L."/>
            <person name="Schwarz S."/>
            <person name="Scholler P."/>
            <person name="Heber S."/>
            <person name="Francs P."/>
            <person name="Bielke C."/>
            <person name="Frishman D."/>
            <person name="Haase D."/>
            <person name="Lemcke K."/>
            <person name="Mewes H.-W."/>
            <person name="Stocker S."/>
            <person name="Zaccaria P."/>
            <person name="Bevan M."/>
            <person name="Wilson R.K."/>
            <person name="de la Bastide M."/>
            <person name="Habermann K."/>
            <person name="Parnell L."/>
            <person name="Dedhia N."/>
            <person name="Gnoj L."/>
            <person name="Schutz K."/>
            <person name="Huang E."/>
            <person name="Spiegel L."/>
            <person name="Sekhon M."/>
            <person name="Murray J."/>
            <person name="Sheet P."/>
            <person name="Cordes M."/>
            <person name="Abu-Threideh J."/>
            <person name="Stoneking T."/>
            <person name="Kalicki J."/>
            <person name="Graves T."/>
            <person name="Harmon G."/>
            <person name="Edwards J."/>
            <person name="Latreille P."/>
            <person name="Courtney L."/>
            <person name="Cloud J."/>
            <person name="Abbott A."/>
            <person name="Scott K."/>
            <person name="Johnson D."/>
            <person name="Minx P."/>
            <person name="Bentley D."/>
            <person name="Fulton B."/>
            <person name="Miller N."/>
            <person name="Greco T."/>
            <person name="Kemp K."/>
            <person name="Kramer J."/>
            <person name="Fulton L."/>
            <person name="Mardis E."/>
            <person name="Dante M."/>
            <person name="Pepin K."/>
            <person name="Hillier L.W."/>
            <person name="Nelson J."/>
            <person name="Spieth J."/>
            <person name="Ryan E."/>
            <person name="Andrews S."/>
            <person name="Geisel C."/>
            <person name="Layman D."/>
            <person name="Du H."/>
            <person name="Ali J."/>
            <person name="Berghoff A."/>
            <person name="Jones K."/>
            <person name="Drone K."/>
            <person name="Cotton M."/>
            <person name="Joshu C."/>
            <person name="Antonoiu B."/>
            <person name="Zidanic M."/>
            <person name="Strong C."/>
            <person name="Sun H."/>
            <person name="Lamar B."/>
            <person name="Yordan C."/>
            <person name="Ma P."/>
            <person name="Zhong J."/>
            <person name="Preston R."/>
            <person name="Vil D."/>
            <person name="Shekher M."/>
            <person name="Matero A."/>
            <person name="Shah R."/>
            <person name="Swaby I.K."/>
            <person name="O'Shaughnessy A."/>
            <person name="Rodriguez M."/>
            <person name="Hoffman J."/>
            <person name="Till S."/>
            <person name="Granat S."/>
            <person name="Shohdy N."/>
            <person name="Hasegawa A."/>
            <person name="Hameed A."/>
            <person name="Lodhi M."/>
            <person name="Johnson A."/>
            <person name="Chen E."/>
            <person name="Marra M.A."/>
            <person name="Martienssen R."/>
            <person name="McCombie W.R."/>
        </authorList>
    </citation>
    <scope>NUCLEOTIDE SEQUENCE [LARGE SCALE GENOMIC DNA]</scope>
    <source>
        <strain>cv. Columbia</strain>
    </source>
</reference>
<reference key="2">
    <citation type="journal article" date="2017" name="Plant J.">
        <title>Araport11: a complete reannotation of the Arabidopsis thaliana reference genome.</title>
        <authorList>
            <person name="Cheng C.Y."/>
            <person name="Krishnakumar V."/>
            <person name="Chan A.P."/>
            <person name="Thibaud-Nissen F."/>
            <person name="Schobel S."/>
            <person name="Town C.D."/>
        </authorList>
    </citation>
    <scope>GENOME REANNOTATION</scope>
    <source>
        <strain>cv. Columbia</strain>
    </source>
</reference>
<reference key="3">
    <citation type="submission" date="2003-12" db="EMBL/GenBank/DDBJ databases">
        <title>Arabidopsis ORF clones.</title>
        <authorList>
            <person name="Kim C.J."/>
            <person name="Chen H."/>
            <person name="Cheuk R.F."/>
            <person name="Shinn P."/>
            <person name="Carninci P."/>
            <person name="Hayashizaki Y."/>
            <person name="Ishida J."/>
            <person name="Kamiya A."/>
            <person name="Kawai J."/>
            <person name="Narusaka M."/>
            <person name="Sakurai T."/>
            <person name="Satou M."/>
            <person name="Seki M."/>
            <person name="Shinozaki K."/>
            <person name="Ecker J.R."/>
        </authorList>
    </citation>
    <scope>NUCLEOTIDE SEQUENCE [LARGE SCALE MRNA]</scope>
</reference>
<reference key="4">
    <citation type="submission" date="2005-03" db="EMBL/GenBank/DDBJ databases">
        <title>Large-scale analysis of RIKEN Arabidopsis full-length (RAFL) cDNAs.</title>
        <authorList>
            <person name="Totoki Y."/>
            <person name="Seki M."/>
            <person name="Ishida J."/>
            <person name="Nakajima M."/>
            <person name="Enju A."/>
            <person name="Kamiya A."/>
            <person name="Narusaka M."/>
            <person name="Shin-i T."/>
            <person name="Nakagawa M."/>
            <person name="Sakamoto N."/>
            <person name="Oishi K."/>
            <person name="Kohara Y."/>
            <person name="Kobayashi M."/>
            <person name="Toyoda A."/>
            <person name="Sakaki Y."/>
            <person name="Sakurai T."/>
            <person name="Iida K."/>
            <person name="Akiyama K."/>
            <person name="Satou M."/>
            <person name="Toyoda T."/>
            <person name="Konagaya A."/>
            <person name="Carninci P."/>
            <person name="Kawai J."/>
            <person name="Hayashizaki Y."/>
            <person name="Shinozaki K."/>
        </authorList>
    </citation>
    <scope>NUCLEOTIDE SEQUENCE [LARGE SCALE MRNA]</scope>
    <source>
        <strain>cv. Columbia</strain>
    </source>
</reference>
<reference key="5">
    <citation type="journal article" date="2002" name="Science">
        <title>Functional annotation of a full-length Arabidopsis cDNA collection.</title>
        <authorList>
            <person name="Seki M."/>
            <person name="Narusaka M."/>
            <person name="Kamiya A."/>
            <person name="Ishida J."/>
            <person name="Satou M."/>
            <person name="Sakurai T."/>
            <person name="Nakajima M."/>
            <person name="Enju A."/>
            <person name="Akiyama K."/>
            <person name="Oono Y."/>
            <person name="Muramatsu M."/>
            <person name="Hayashizaki Y."/>
            <person name="Kawai J."/>
            <person name="Carninci P."/>
            <person name="Itoh M."/>
            <person name="Ishii Y."/>
            <person name="Arakawa T."/>
            <person name="Shibata K."/>
            <person name="Shinagawa A."/>
            <person name="Shinozaki K."/>
        </authorList>
    </citation>
    <scope>NUCLEOTIDE SEQUENCE [LARGE SCALE MRNA] OF 13-346</scope>
    <source>
        <strain>cv. Columbia</strain>
    </source>
</reference>
<reference key="6">
    <citation type="journal article" date="2006" name="Amino Acids">
        <title>Histidine biosynthesis in plants.</title>
        <authorList>
            <person name="Stepansky A."/>
            <person name="Leustek T."/>
        </authorList>
    </citation>
    <scope>GENE FAMILY</scope>
    <scope>NOMENCLATURE</scope>
</reference>
<reference key="7">
    <citation type="journal article" date="2007" name="Plant Physiol.">
        <title>Genetic dissection of histidine biosynthesis in Arabidopsis.</title>
        <authorList>
            <person name="Muralla R."/>
            <person name="Sweeney C."/>
            <person name="Stepansky A."/>
            <person name="Leustek T."/>
            <person name="Meinke D."/>
        </authorList>
    </citation>
    <scope>GENE FAMILY</scope>
    <scope>NOMENCLATURE</scope>
</reference>
<reference key="8">
    <citation type="journal article" date="2008" name="PLoS ONE">
        <title>Sorting signals, N-terminal modifications and abundance of the chloroplast proteome.</title>
        <authorList>
            <person name="Zybailov B."/>
            <person name="Rutschow H."/>
            <person name="Friso G."/>
            <person name="Rudella A."/>
            <person name="Emanuelsson O."/>
            <person name="Sun Q."/>
            <person name="van Wijk K.J."/>
        </authorList>
    </citation>
    <scope>IDENTIFICATION BY MASS SPECTROMETRY</scope>
    <scope>SUBCELLULAR LOCATION [LARGE SCALE ANALYSIS]</scope>
</reference>
<reference key="9">
    <citation type="journal article" date="2009" name="Plant Physiol.">
        <title>VTC4 is a bifunctional enzyme that affects myoinositol and ascorbate biosynthesis in plants.</title>
        <authorList>
            <person name="Torabinejad J."/>
            <person name="Donahue J.L."/>
            <person name="Gunesekera B.N."/>
            <person name="Allen-Daniels M.J."/>
            <person name="Gillaspy G.E."/>
        </authorList>
    </citation>
    <scope>FUNCTION</scope>
    <scope>CATALYTIC ACTIVITY</scope>
    <scope>DISRUPTION PHENOTYPE</scope>
</reference>
<reference key="10">
    <citation type="journal article" date="2011" name="J. Plant Res.">
        <title>Expression and functions of myo-inositol monophosphatase family genes in seed development of Arabidopsis.</title>
        <authorList>
            <person name="Sato Y."/>
            <person name="Yazawa K."/>
            <person name="Yoshida S."/>
            <person name="Tamaoki M."/>
            <person name="Nakajima N."/>
            <person name="Iwai H."/>
            <person name="Ishii T."/>
            <person name="Satoh S."/>
        </authorList>
    </citation>
    <scope>FUNCTION</scope>
    <scope>TISSUE SPECIFICITY</scope>
    <scope>DEVELOPMENTAL STAGE</scope>
    <scope>DISRUPTION PHENOTYPE</scope>
</reference>
<reference key="11">
    <citation type="journal article" date="2010" name="Plant Physiol.">
        <title>The missing link in plant histidine biosynthesis: Arabidopsis myoinositol monophosphatase-like2 encodes a functional histidinol-phosphate phosphatase.</title>
        <authorList>
            <person name="Petersen L.N."/>
            <person name="Marineo S."/>
            <person name="Mandala S."/>
            <person name="Davids F."/>
            <person name="Sewell B.T."/>
            <person name="Ingle R.A."/>
        </authorList>
    </citation>
    <scope>FUNCTION</scope>
    <scope>CATALYTIC ACTIVITY</scope>
    <scope>MUTAGENESIS OF GLY-195</scope>
    <scope>TISSUE SPECIFICITY</scope>
    <scope>DEVELOPMENTAL STAGE</scope>
    <scope>SUBCELLULAR LOCATION</scope>
    <scope>DISRUPTION PHENOTYPE</scope>
</reference>
<evidence type="ECO:0000250" key="1"/>
<evidence type="ECO:0000255" key="2"/>
<evidence type="ECO:0000269" key="3">
    <source>
    </source>
</evidence>
<evidence type="ECO:0000269" key="4">
    <source>
    </source>
</evidence>
<evidence type="ECO:0000269" key="5">
    <source>
    </source>
</evidence>
<evidence type="ECO:0000269" key="6">
    <source>
    </source>
</evidence>
<evidence type="ECO:0000305" key="7"/>
<accession>Q6NPM8</accession>
<accession>A0A1P8B6U8</accession>
<accession>F4JV95</accession>
<accession>Q67Y38</accession>
<accession>Q9T021</accession>
<sequence>MLAQSHFFSKSFDLIPPQSPALRSANPSLRISSSYSNSRLSFLSSSAIAVPVSRRRFCLTMASNSKRPNISNESPSELSDTELDRFAAVGNALADASGEVIRKYFRKKFDIVDKDDMSPVTIADQMAEEAMVSIIFQNLPSHAIYGEEKGWRCKEESADYVWVLDPIDGTKSFITGKPVFGTLIALLYKGKPILGLIDQPILKERWIGMNGRRTKLNGEDISTRSCPKLSQAYLYTTSPHLFSEEAEKAYSRVRDKVKVPLYGCDCYAYALLASGFVDLVIESGLKPYDFLALVPVIEGAGGTITDWTGKRFLWEASSSAVATSFNVVAAGDSDIHQQALESLEWH</sequence>
<organism>
    <name type="scientific">Arabidopsis thaliana</name>
    <name type="common">Mouse-ear cress</name>
    <dbReference type="NCBI Taxonomy" id="3702"/>
    <lineage>
        <taxon>Eukaryota</taxon>
        <taxon>Viridiplantae</taxon>
        <taxon>Streptophyta</taxon>
        <taxon>Embryophyta</taxon>
        <taxon>Tracheophyta</taxon>
        <taxon>Spermatophyta</taxon>
        <taxon>Magnoliopsida</taxon>
        <taxon>eudicotyledons</taxon>
        <taxon>Gunneridae</taxon>
        <taxon>Pentapetalae</taxon>
        <taxon>rosids</taxon>
        <taxon>malvids</taxon>
        <taxon>Brassicales</taxon>
        <taxon>Brassicaceae</taxon>
        <taxon>Camelineae</taxon>
        <taxon>Arabidopsis</taxon>
    </lineage>
</organism>
<protein>
    <recommendedName>
        <fullName>Bifunctional phosphatase IMPL2, chloroplastic</fullName>
    </recommendedName>
    <alternativeName>
        <fullName>Histidinol-phosphatase</fullName>
    </alternativeName>
    <alternativeName>
        <fullName>Histidinol-phosphate phosphatase</fullName>
        <shortName>HPP</shortName>
        <ecNumber evidence="5">3.1.3.15</ecNumber>
    </alternativeName>
    <alternativeName>
        <fullName>Inositol-phosphate phosphatase</fullName>
        <ecNumber evidence="4 5">3.1.3.25</ecNumber>
    </alternativeName>
    <alternativeName>
        <fullName>L-galactose 1-phosphate phosphatase</fullName>
        <ecNumber evidence="4">3.1.3.93</ecNumber>
    </alternativeName>
    <alternativeName>
        <fullName>Protein HISTIDINE BIOSYNTHESIS 7</fullName>
    </alternativeName>
    <alternativeName>
        <fullName>Protein MYO-INOSITOL MONOPHOSPHATASE-LIKE 2</fullName>
    </alternativeName>
</protein>
<dbReference type="EC" id="3.1.3.15" evidence="5"/>
<dbReference type="EC" id="3.1.3.25" evidence="4 5"/>
<dbReference type="EC" id="3.1.3.93" evidence="4"/>
<dbReference type="EMBL" id="AL050351">
    <property type="protein sequence ID" value="CAB43627.1"/>
    <property type="status" value="ALT_INIT"/>
    <property type="molecule type" value="Genomic_DNA"/>
</dbReference>
<dbReference type="EMBL" id="AL161594">
    <property type="protein sequence ID" value="CAB80575.1"/>
    <property type="status" value="ALT_INIT"/>
    <property type="molecule type" value="Genomic_DNA"/>
</dbReference>
<dbReference type="EMBL" id="CP002687">
    <property type="protein sequence ID" value="AEE87019.2"/>
    <property type="molecule type" value="Genomic_DNA"/>
</dbReference>
<dbReference type="EMBL" id="CP002687">
    <property type="protein sequence ID" value="ANM67312.1"/>
    <property type="status" value="ALT_INIT"/>
    <property type="molecule type" value="Genomic_DNA"/>
</dbReference>
<dbReference type="EMBL" id="BT010891">
    <property type="protein sequence ID" value="AAR24669.1"/>
    <property type="molecule type" value="mRNA"/>
</dbReference>
<dbReference type="EMBL" id="AK175533">
    <property type="protein sequence ID" value="BAD43296.1"/>
    <property type="molecule type" value="mRNA"/>
</dbReference>
<dbReference type="EMBL" id="AK176630">
    <property type="protein sequence ID" value="BAD44393.1"/>
    <property type="molecule type" value="mRNA"/>
</dbReference>
<dbReference type="EMBL" id="AK220687">
    <property type="protein sequence ID" value="BAD93756.1"/>
    <property type="molecule type" value="mRNA"/>
</dbReference>
<dbReference type="EMBL" id="AK118971">
    <property type="protein sequence ID" value="BAC43548.1"/>
    <property type="status" value="ALT_INIT"/>
    <property type="molecule type" value="mRNA"/>
</dbReference>
<dbReference type="PIR" id="T08560">
    <property type="entry name" value="T08560"/>
</dbReference>
<dbReference type="RefSeq" id="NP_001320164.1">
    <property type="nucleotide sequence ID" value="NM_001342523.1"/>
</dbReference>
<dbReference type="RefSeq" id="NP_195623.3">
    <property type="nucleotide sequence ID" value="NM_120072.5"/>
</dbReference>
<dbReference type="SMR" id="Q6NPM8"/>
<dbReference type="FunCoup" id="Q6NPM8">
    <property type="interactions" value="433"/>
</dbReference>
<dbReference type="STRING" id="3702.Q6NPM8"/>
<dbReference type="PaxDb" id="3702-AT4G39120.1"/>
<dbReference type="ProteomicsDB" id="230246"/>
<dbReference type="EnsemblPlants" id="AT4G39120.1">
    <property type="protein sequence ID" value="AT4G39120.1"/>
    <property type="gene ID" value="AT4G39120"/>
</dbReference>
<dbReference type="GeneID" id="830067"/>
<dbReference type="Gramene" id="AT4G39120.1">
    <property type="protein sequence ID" value="AT4G39120.1"/>
    <property type="gene ID" value="AT4G39120"/>
</dbReference>
<dbReference type="KEGG" id="ath:AT4G39120"/>
<dbReference type="Araport" id="AT4G39120"/>
<dbReference type="TAIR" id="AT4G39120">
    <property type="gene designation" value="IMPL2"/>
</dbReference>
<dbReference type="eggNOG" id="KOG2951">
    <property type="taxonomic scope" value="Eukaryota"/>
</dbReference>
<dbReference type="HOGENOM" id="CLU_044118_4_1_1"/>
<dbReference type="InParanoid" id="Q6NPM8"/>
<dbReference type="OMA" id="AYGDFWS"/>
<dbReference type="PhylomeDB" id="Q6NPM8"/>
<dbReference type="BioCyc" id="ARA:AT4G39120-MONOMER"/>
<dbReference type="BioCyc" id="MetaCyc:AT4G39120-MONOMER"/>
<dbReference type="BRENDA" id="3.1.3.15">
    <property type="organism ID" value="399"/>
</dbReference>
<dbReference type="BRENDA" id="3.1.3.25">
    <property type="organism ID" value="399"/>
</dbReference>
<dbReference type="UniPathway" id="UPA00031">
    <property type="reaction ID" value="UER00013"/>
</dbReference>
<dbReference type="UniPathway" id="UPA00823">
    <property type="reaction ID" value="UER00788"/>
</dbReference>
<dbReference type="PRO" id="PR:Q6NPM8"/>
<dbReference type="Proteomes" id="UP000006548">
    <property type="component" value="Chromosome 4"/>
</dbReference>
<dbReference type="ExpressionAtlas" id="Q6NPM8">
    <property type="expression patterns" value="baseline and differential"/>
</dbReference>
<dbReference type="GO" id="GO:0009507">
    <property type="term" value="C:chloroplast"/>
    <property type="evidence" value="ECO:0000314"/>
    <property type="project" value="UniProtKB"/>
</dbReference>
<dbReference type="GO" id="GO:0004401">
    <property type="term" value="F:histidinol-phosphatase activity"/>
    <property type="evidence" value="ECO:0000316"/>
    <property type="project" value="UniProtKB"/>
</dbReference>
<dbReference type="GO" id="GO:0052834">
    <property type="term" value="F:inositol monophosphate phosphatase activity"/>
    <property type="evidence" value="ECO:0000316"/>
    <property type="project" value="UniProtKB"/>
</dbReference>
<dbReference type="GO" id="GO:0010347">
    <property type="term" value="F:L-galactose-1-phosphate phosphatase activity"/>
    <property type="evidence" value="ECO:0007669"/>
    <property type="project" value="RHEA"/>
</dbReference>
<dbReference type="GO" id="GO:0046872">
    <property type="term" value="F:metal ion binding"/>
    <property type="evidence" value="ECO:0007669"/>
    <property type="project" value="UniProtKB-KW"/>
</dbReference>
<dbReference type="GO" id="GO:0006021">
    <property type="term" value="P:inositol biosynthetic process"/>
    <property type="evidence" value="ECO:0007669"/>
    <property type="project" value="UniProtKB-UniPathway"/>
</dbReference>
<dbReference type="GO" id="GO:0000105">
    <property type="term" value="P:L-histidine biosynthetic process"/>
    <property type="evidence" value="ECO:0000316"/>
    <property type="project" value="UniProtKB"/>
</dbReference>
<dbReference type="CDD" id="cd01641">
    <property type="entry name" value="Bacterial_IMPase_like_1"/>
    <property type="match status" value="1"/>
</dbReference>
<dbReference type="FunFam" id="3.30.540.10:FF:000021">
    <property type="entry name" value="Inositol monophosphatase"/>
    <property type="match status" value="1"/>
</dbReference>
<dbReference type="FunFam" id="3.40.190.80:FF:000013">
    <property type="entry name" value="Inositol monophosphatase"/>
    <property type="match status" value="1"/>
</dbReference>
<dbReference type="Gene3D" id="3.40.190.80">
    <property type="match status" value="1"/>
</dbReference>
<dbReference type="Gene3D" id="3.30.540.10">
    <property type="entry name" value="Fructose-1,6-Bisphosphatase, subunit A, domain 1"/>
    <property type="match status" value="1"/>
</dbReference>
<dbReference type="InterPro" id="IPR011809">
    <property type="entry name" value="His_9_proposed"/>
</dbReference>
<dbReference type="InterPro" id="IPR020583">
    <property type="entry name" value="Inositol_monoP_metal-BS"/>
</dbReference>
<dbReference type="InterPro" id="IPR051090">
    <property type="entry name" value="Inositol_monoP_superfamily"/>
</dbReference>
<dbReference type="InterPro" id="IPR000760">
    <property type="entry name" value="Inositol_monophosphatase-like"/>
</dbReference>
<dbReference type="NCBIfam" id="TIGR02067">
    <property type="entry name" value="his_9_HisN"/>
    <property type="match status" value="1"/>
</dbReference>
<dbReference type="PANTHER" id="PTHR43200:SF6">
    <property type="entry name" value="3'(2'),5'-BISPHOSPHATE NUCLEOTIDASE"/>
    <property type="match status" value="1"/>
</dbReference>
<dbReference type="PANTHER" id="PTHR43200">
    <property type="entry name" value="PHOSPHATASE"/>
    <property type="match status" value="1"/>
</dbReference>
<dbReference type="Pfam" id="PF00459">
    <property type="entry name" value="Inositol_P"/>
    <property type="match status" value="1"/>
</dbReference>
<dbReference type="PRINTS" id="PR00377">
    <property type="entry name" value="IMPHPHTASES"/>
</dbReference>
<dbReference type="SUPFAM" id="SSF56655">
    <property type="entry name" value="Carbohydrate phosphatase"/>
    <property type="match status" value="1"/>
</dbReference>
<dbReference type="PROSITE" id="PS00629">
    <property type="entry name" value="IMP_1"/>
    <property type="match status" value="1"/>
</dbReference>
<gene>
    <name type="primary">HISN7</name>
    <name type="synonym">IMPL2</name>
    <name type="ordered locus">At4g39120</name>
    <name type="ORF">T22F8.20</name>
</gene>
<name>HIS7_ARATH</name>
<keyword id="KW-0028">Amino-acid biosynthesis</keyword>
<keyword id="KW-0150">Chloroplast</keyword>
<keyword id="KW-0368">Histidine biosynthesis</keyword>
<keyword id="KW-0378">Hydrolase</keyword>
<keyword id="KW-0460">Magnesium</keyword>
<keyword id="KW-0479">Metal-binding</keyword>
<keyword id="KW-0934">Plastid</keyword>
<keyword id="KW-1185">Reference proteome</keyword>
<keyword id="KW-0809">Transit peptide</keyword>
<proteinExistence type="evidence at protein level"/>
<feature type="transit peptide" description="Chloroplast" evidence="2">
    <location>
        <begin position="1"/>
        <end position="61"/>
    </location>
</feature>
<feature type="chain" id="PRO_0000383678" description="Bifunctional phosphatase IMPL2, chloroplastic">
    <location>
        <begin position="62"/>
        <end position="346"/>
    </location>
</feature>
<feature type="binding site" evidence="1">
    <location>
        <position position="147"/>
    </location>
    <ligand>
        <name>Mg(2+)</name>
        <dbReference type="ChEBI" id="CHEBI:18420"/>
        <label>1</label>
    </ligand>
</feature>
<feature type="binding site" evidence="1">
    <location>
        <position position="147"/>
    </location>
    <ligand>
        <name>substrate</name>
    </ligand>
</feature>
<feature type="binding site" evidence="1">
    <location>
        <position position="165"/>
    </location>
    <ligand>
        <name>Mg(2+)</name>
        <dbReference type="ChEBI" id="CHEBI:18420"/>
        <label>1</label>
    </ligand>
</feature>
<feature type="binding site" evidence="1">
    <location>
        <position position="165"/>
    </location>
    <ligand>
        <name>Mg(2+)</name>
        <dbReference type="ChEBI" id="CHEBI:18420"/>
        <label>2</label>
    </ligand>
</feature>
<feature type="binding site" evidence="1">
    <location>
        <begin position="167"/>
        <end position="170"/>
    </location>
    <ligand>
        <name>substrate</name>
    </ligand>
</feature>
<feature type="binding site" evidence="1">
    <location>
        <position position="168"/>
    </location>
    <ligand>
        <name>Mg(2+)</name>
        <dbReference type="ChEBI" id="CHEBI:18420"/>
        <label>2</label>
    </ligand>
</feature>
<feature type="binding site" evidence="1">
    <location>
        <begin position="263"/>
        <end position="265"/>
    </location>
    <ligand>
        <name>substrate</name>
    </ligand>
</feature>
<feature type="binding site" evidence="1">
    <location>
        <position position="282"/>
    </location>
    <ligand>
        <name>substrate</name>
    </ligand>
</feature>
<feature type="binding site" evidence="1">
    <location>
        <position position="289"/>
    </location>
    <ligand>
        <name>Mg(2+)</name>
        <dbReference type="ChEBI" id="CHEBI:18420"/>
        <label>2</label>
    </ligand>
</feature>
<feature type="binding site" evidence="1">
    <location>
        <position position="289"/>
    </location>
    <ligand>
        <name>substrate</name>
    </ligand>
</feature>
<feature type="mutagenesis site" description="Loss of histidinol-phosphatase activity." evidence="5">
    <original>G</original>
    <variation>R</variation>
    <location>
        <position position="195"/>
    </location>
</feature>